<keyword id="KW-0966">Cell projection</keyword>
<keyword id="KW-0969">Cilium</keyword>
<keyword id="KW-0175">Coiled coil</keyword>
<keyword id="KW-0963">Cytoplasm</keyword>
<keyword id="KW-0206">Cytoskeleton</keyword>
<keyword id="KW-0221">Differentiation</keyword>
<keyword id="KW-1185">Reference proteome</keyword>
<keyword id="KW-0744">Spermatogenesis</keyword>
<feature type="chain" id="PRO_0000307227" description="Cilia- and flagella-associated protein 157">
    <location>
        <begin position="1"/>
        <end position="471"/>
    </location>
</feature>
<feature type="region of interest" description="Disordered" evidence="3">
    <location>
        <begin position="1"/>
        <end position="33"/>
    </location>
</feature>
<feature type="region of interest" description="Disordered" evidence="3">
    <location>
        <begin position="447"/>
        <end position="471"/>
    </location>
</feature>
<feature type="coiled-coil region" evidence="2">
    <location>
        <begin position="27"/>
        <end position="190"/>
    </location>
</feature>
<feature type="coiled-coil region" evidence="2">
    <location>
        <begin position="225"/>
        <end position="369"/>
    </location>
</feature>
<feature type="compositionally biased region" description="Basic and acidic residues" evidence="3">
    <location>
        <begin position="23"/>
        <end position="33"/>
    </location>
</feature>
<feature type="compositionally biased region" description="Polar residues" evidence="3">
    <location>
        <begin position="451"/>
        <end position="471"/>
    </location>
</feature>
<feature type="sequence conflict" description="In Ref. 2; AAI21716." evidence="4" ref="2">
    <original>G</original>
    <variation>N</variation>
    <location>
        <position position="19"/>
    </location>
</feature>
<feature type="sequence conflict" description="In Ref. 2; AAI21716." evidence="4" ref="2">
    <original>Q</original>
    <variation>R</variation>
    <location>
        <position position="40"/>
    </location>
</feature>
<feature type="sequence conflict" description="In Ref. 2; AAI21716." evidence="4" ref="2">
    <original>L</original>
    <variation>P</variation>
    <location>
        <position position="50"/>
    </location>
</feature>
<feature type="sequence conflict" description="In Ref. 2; AAI21716." evidence="4" ref="2">
    <original>T</original>
    <variation>A</variation>
    <location>
        <position position="205"/>
    </location>
</feature>
<feature type="sequence conflict" description="In Ref. 2; AAI21716." evidence="4" ref="2">
    <original>T</original>
    <variation>M</variation>
    <location>
        <position position="221"/>
    </location>
</feature>
<feature type="sequence conflict" description="In Ref. 2; AAI21716." evidence="4" ref="2">
    <original>E</original>
    <variation>K</variation>
    <location>
        <position position="245"/>
    </location>
</feature>
<feature type="sequence conflict" description="In Ref. 2; AAI21716." evidence="4" ref="2">
    <original>G</original>
    <variation>D</variation>
    <location>
        <position position="265"/>
    </location>
</feature>
<feature type="sequence conflict" description="In Ref. 2; AAI21716." evidence="4" ref="2">
    <original>I</original>
    <variation>M</variation>
    <location>
        <position position="274"/>
    </location>
</feature>
<feature type="sequence conflict" description="In Ref. 2; AAI21716." evidence="4" ref="2">
    <original>N</original>
    <variation>S</variation>
    <location>
        <position position="362"/>
    </location>
</feature>
<feature type="sequence conflict" description="In Ref. 2; AAI21716." evidence="4" ref="2">
    <original>V</original>
    <variation>A</variation>
    <location>
        <position position="370"/>
    </location>
</feature>
<feature type="sequence conflict" description="In Ref. 2; AAI21716." evidence="4" ref="2">
    <original>S</original>
    <variation>C</variation>
    <location>
        <position position="385"/>
    </location>
</feature>
<feature type="sequence conflict" description="In Ref. 2; AAI21716." evidence="4" ref="2">
    <original>L</original>
    <variation>F</variation>
    <location>
        <position position="419"/>
    </location>
</feature>
<feature type="sequence conflict" description="In Ref. 2; AAI21716." evidence="4" ref="2">
    <original>P</original>
    <variation>S</variation>
    <location>
        <position position="432"/>
    </location>
</feature>
<name>CF157_DANRE</name>
<gene>
    <name type="primary">cfap157</name>
    <name type="ORF">si:ch211-233f10.4</name>
</gene>
<accession>A2BDR7</accession>
<accession>Q0V978</accession>
<accession>Q1RM17</accession>
<protein>
    <recommendedName>
        <fullName>Cilia- and flagella-associated protein 157</fullName>
    </recommendedName>
</protein>
<evidence type="ECO:0000250" key="1">
    <source>
        <dbReference type="UniProtKB" id="Q0VFX2"/>
    </source>
</evidence>
<evidence type="ECO:0000255" key="2"/>
<evidence type="ECO:0000256" key="3">
    <source>
        <dbReference type="SAM" id="MobiDB-lite"/>
    </source>
</evidence>
<evidence type="ECO:0000305" key="4"/>
<sequence>MPPKKNGKKNRDQAIKTGGMEETEQKNAEELTESDKKFYQAQIRDLEERLERYQLKCDELEVQEKDLSSKINNVEKEKKDIVLFLKRTLAKKEDKLNDLAETLSRHQQAQEAERESFESQLSLLRRELQENKEKYTSENMTLAGKLASLEEFSTQRETLIAERRSLEEQLRKQKEDHQAEIYNLEKKAVLDNDRLKKEMLQHVATVAAEFRRVSDEKMPETTLRAMQENLSVTAQLQQLSEKTKELLKENDALRARERQLKRENGITEPLLHEITKKSVANQKVVLQLTEKCKQMQSEVEKCTKLKQDHQELLDIHSAVCTEIEDLRKKHAAVTEDLNQTKAEVERQKKELEEESRMRAQINTVLEEAAVALKEALRDVPEEEDSELKVTVRRSQMMQKLLAVLDGAAALGKGPALTDLMTCRPGALQKTSPHLSHYKTGDLGLVPRKTHSTSTKMGNLSRSAYTSLQKKA</sequence>
<comment type="function">
    <text evidence="1">Specifically required during spermatogenesis for flagellum morphogenesis and sperm motility.</text>
</comment>
<comment type="subcellular location">
    <subcellularLocation>
        <location evidence="1">Cytoplasm</location>
        <location evidence="1">Cytoskeleton</location>
        <location evidence="1">Cilium basal body</location>
    </subcellularLocation>
</comment>
<comment type="similarity">
    <text evidence="4">Belongs to the CFAP157 family.</text>
</comment>
<comment type="sequence caution" evidence="4">
    <conflict type="erroneous initiation">
        <sequence resource="EMBL-CDS" id="AAI15177"/>
    </conflict>
</comment>
<comment type="sequence caution" evidence="4">
    <conflict type="erroneous initiation">
        <sequence resource="EMBL-CDS" id="AAI21716"/>
    </conflict>
</comment>
<dbReference type="EMBL" id="BX001023">
    <property type="protein sequence ID" value="CAM14089.1"/>
    <property type="molecule type" value="Genomic_DNA"/>
</dbReference>
<dbReference type="EMBL" id="BC115176">
    <property type="protein sequence ID" value="AAI15177.1"/>
    <property type="status" value="ALT_INIT"/>
    <property type="molecule type" value="mRNA"/>
</dbReference>
<dbReference type="EMBL" id="BC121715">
    <property type="protein sequence ID" value="AAI21716.1"/>
    <property type="status" value="ALT_INIT"/>
    <property type="molecule type" value="mRNA"/>
</dbReference>
<dbReference type="RefSeq" id="NP_001103638.1">
    <property type="nucleotide sequence ID" value="NM_001110168.1"/>
</dbReference>
<dbReference type="SMR" id="A2BDR7"/>
<dbReference type="FunCoup" id="A2BDR7">
    <property type="interactions" value="828"/>
</dbReference>
<dbReference type="PaxDb" id="7955-ENSDARP00000104860"/>
<dbReference type="Ensembl" id="ENSDART00000159599">
    <property type="protein sequence ID" value="ENSDARP00000139815"/>
    <property type="gene ID" value="ENSDARG00000099042"/>
</dbReference>
<dbReference type="GeneID" id="794225"/>
<dbReference type="KEGG" id="dre:794225"/>
<dbReference type="AGR" id="ZFIN:ZDB-GENE-060526-118"/>
<dbReference type="CTD" id="286207"/>
<dbReference type="ZFIN" id="ZDB-GENE-060526-118">
    <property type="gene designation" value="cfap157"/>
</dbReference>
<dbReference type="eggNOG" id="ENOG502QQK8">
    <property type="taxonomic scope" value="Eukaryota"/>
</dbReference>
<dbReference type="HOGENOM" id="CLU_025198_2_0_1"/>
<dbReference type="InParanoid" id="A2BDR7"/>
<dbReference type="OMA" id="KIKSLCR"/>
<dbReference type="OrthoDB" id="166611at2759"/>
<dbReference type="PhylomeDB" id="A2BDR7"/>
<dbReference type="TreeFam" id="TF329637"/>
<dbReference type="PRO" id="PR:A2BDR7"/>
<dbReference type="Proteomes" id="UP000000437">
    <property type="component" value="Alternate scaffold 5"/>
</dbReference>
<dbReference type="Proteomes" id="UP000000437">
    <property type="component" value="Chromosome 5"/>
</dbReference>
<dbReference type="Bgee" id="ENSDARG00000099042">
    <property type="expression patterns" value="Expressed in liver and 10 other cell types or tissues"/>
</dbReference>
<dbReference type="GO" id="GO:0036064">
    <property type="term" value="C:ciliary basal body"/>
    <property type="evidence" value="ECO:0000250"/>
    <property type="project" value="UniProtKB"/>
</dbReference>
<dbReference type="GO" id="GO:0005737">
    <property type="term" value="C:cytoplasm"/>
    <property type="evidence" value="ECO:0007669"/>
    <property type="project" value="UniProtKB-KW"/>
</dbReference>
<dbReference type="GO" id="GO:0008017">
    <property type="term" value="F:microtubule binding"/>
    <property type="evidence" value="ECO:0000250"/>
    <property type="project" value="UniProtKB"/>
</dbReference>
<dbReference type="GO" id="GO:0007288">
    <property type="term" value="P:sperm axoneme assembly"/>
    <property type="evidence" value="ECO:0000250"/>
    <property type="project" value="UniProtKB"/>
</dbReference>
<dbReference type="InterPro" id="IPR038844">
    <property type="entry name" value="CFAP157"/>
</dbReference>
<dbReference type="PANTHER" id="PTHR31954">
    <property type="entry name" value="CILIA- AND FLAGELLA-ASSOCIATED PROTEIN 157"/>
    <property type="match status" value="1"/>
</dbReference>
<dbReference type="PANTHER" id="PTHR31954:SF1">
    <property type="entry name" value="CILIA- AND FLAGELLA-ASSOCIATED PROTEIN 157"/>
    <property type="match status" value="1"/>
</dbReference>
<organism>
    <name type="scientific">Danio rerio</name>
    <name type="common">Zebrafish</name>
    <name type="synonym">Brachydanio rerio</name>
    <dbReference type="NCBI Taxonomy" id="7955"/>
    <lineage>
        <taxon>Eukaryota</taxon>
        <taxon>Metazoa</taxon>
        <taxon>Chordata</taxon>
        <taxon>Craniata</taxon>
        <taxon>Vertebrata</taxon>
        <taxon>Euteleostomi</taxon>
        <taxon>Actinopterygii</taxon>
        <taxon>Neopterygii</taxon>
        <taxon>Teleostei</taxon>
        <taxon>Ostariophysi</taxon>
        <taxon>Cypriniformes</taxon>
        <taxon>Danionidae</taxon>
        <taxon>Danioninae</taxon>
        <taxon>Danio</taxon>
    </lineage>
</organism>
<reference key="1">
    <citation type="journal article" date="2013" name="Nature">
        <title>The zebrafish reference genome sequence and its relationship to the human genome.</title>
        <authorList>
            <person name="Howe K."/>
            <person name="Clark M.D."/>
            <person name="Torroja C.F."/>
            <person name="Torrance J."/>
            <person name="Berthelot C."/>
            <person name="Muffato M."/>
            <person name="Collins J.E."/>
            <person name="Humphray S."/>
            <person name="McLaren K."/>
            <person name="Matthews L."/>
            <person name="McLaren S."/>
            <person name="Sealy I."/>
            <person name="Caccamo M."/>
            <person name="Churcher C."/>
            <person name="Scott C."/>
            <person name="Barrett J.C."/>
            <person name="Koch R."/>
            <person name="Rauch G.J."/>
            <person name="White S."/>
            <person name="Chow W."/>
            <person name="Kilian B."/>
            <person name="Quintais L.T."/>
            <person name="Guerra-Assuncao J.A."/>
            <person name="Zhou Y."/>
            <person name="Gu Y."/>
            <person name="Yen J."/>
            <person name="Vogel J.H."/>
            <person name="Eyre T."/>
            <person name="Redmond S."/>
            <person name="Banerjee R."/>
            <person name="Chi J."/>
            <person name="Fu B."/>
            <person name="Langley E."/>
            <person name="Maguire S.F."/>
            <person name="Laird G.K."/>
            <person name="Lloyd D."/>
            <person name="Kenyon E."/>
            <person name="Donaldson S."/>
            <person name="Sehra H."/>
            <person name="Almeida-King J."/>
            <person name="Loveland J."/>
            <person name="Trevanion S."/>
            <person name="Jones M."/>
            <person name="Quail M."/>
            <person name="Willey D."/>
            <person name="Hunt A."/>
            <person name="Burton J."/>
            <person name="Sims S."/>
            <person name="McLay K."/>
            <person name="Plumb B."/>
            <person name="Davis J."/>
            <person name="Clee C."/>
            <person name="Oliver K."/>
            <person name="Clark R."/>
            <person name="Riddle C."/>
            <person name="Elliot D."/>
            <person name="Threadgold G."/>
            <person name="Harden G."/>
            <person name="Ware D."/>
            <person name="Begum S."/>
            <person name="Mortimore B."/>
            <person name="Kerry G."/>
            <person name="Heath P."/>
            <person name="Phillimore B."/>
            <person name="Tracey A."/>
            <person name="Corby N."/>
            <person name="Dunn M."/>
            <person name="Johnson C."/>
            <person name="Wood J."/>
            <person name="Clark S."/>
            <person name="Pelan S."/>
            <person name="Griffiths G."/>
            <person name="Smith M."/>
            <person name="Glithero R."/>
            <person name="Howden P."/>
            <person name="Barker N."/>
            <person name="Lloyd C."/>
            <person name="Stevens C."/>
            <person name="Harley J."/>
            <person name="Holt K."/>
            <person name="Panagiotidis G."/>
            <person name="Lovell J."/>
            <person name="Beasley H."/>
            <person name="Henderson C."/>
            <person name="Gordon D."/>
            <person name="Auger K."/>
            <person name="Wright D."/>
            <person name="Collins J."/>
            <person name="Raisen C."/>
            <person name="Dyer L."/>
            <person name="Leung K."/>
            <person name="Robertson L."/>
            <person name="Ambridge K."/>
            <person name="Leongamornlert D."/>
            <person name="McGuire S."/>
            <person name="Gilderthorp R."/>
            <person name="Griffiths C."/>
            <person name="Manthravadi D."/>
            <person name="Nichol S."/>
            <person name="Barker G."/>
            <person name="Whitehead S."/>
            <person name="Kay M."/>
            <person name="Brown J."/>
            <person name="Murnane C."/>
            <person name="Gray E."/>
            <person name="Humphries M."/>
            <person name="Sycamore N."/>
            <person name="Barker D."/>
            <person name="Saunders D."/>
            <person name="Wallis J."/>
            <person name="Babbage A."/>
            <person name="Hammond S."/>
            <person name="Mashreghi-Mohammadi M."/>
            <person name="Barr L."/>
            <person name="Martin S."/>
            <person name="Wray P."/>
            <person name="Ellington A."/>
            <person name="Matthews N."/>
            <person name="Ellwood M."/>
            <person name="Woodmansey R."/>
            <person name="Clark G."/>
            <person name="Cooper J."/>
            <person name="Tromans A."/>
            <person name="Grafham D."/>
            <person name="Skuce C."/>
            <person name="Pandian R."/>
            <person name="Andrews R."/>
            <person name="Harrison E."/>
            <person name="Kimberley A."/>
            <person name="Garnett J."/>
            <person name="Fosker N."/>
            <person name="Hall R."/>
            <person name="Garner P."/>
            <person name="Kelly D."/>
            <person name="Bird C."/>
            <person name="Palmer S."/>
            <person name="Gehring I."/>
            <person name="Berger A."/>
            <person name="Dooley C.M."/>
            <person name="Ersan-Urun Z."/>
            <person name="Eser C."/>
            <person name="Geiger H."/>
            <person name="Geisler M."/>
            <person name="Karotki L."/>
            <person name="Kirn A."/>
            <person name="Konantz J."/>
            <person name="Konantz M."/>
            <person name="Oberlander M."/>
            <person name="Rudolph-Geiger S."/>
            <person name="Teucke M."/>
            <person name="Lanz C."/>
            <person name="Raddatz G."/>
            <person name="Osoegawa K."/>
            <person name="Zhu B."/>
            <person name="Rapp A."/>
            <person name="Widaa S."/>
            <person name="Langford C."/>
            <person name="Yang F."/>
            <person name="Schuster S.C."/>
            <person name="Carter N.P."/>
            <person name="Harrow J."/>
            <person name="Ning Z."/>
            <person name="Herrero J."/>
            <person name="Searle S.M."/>
            <person name="Enright A."/>
            <person name="Geisler R."/>
            <person name="Plasterk R.H."/>
            <person name="Lee C."/>
            <person name="Westerfield M."/>
            <person name="de Jong P.J."/>
            <person name="Zon L.I."/>
            <person name="Postlethwait J.H."/>
            <person name="Nusslein-Volhard C."/>
            <person name="Hubbard T.J."/>
            <person name="Roest Crollius H."/>
            <person name="Rogers J."/>
            <person name="Stemple D.L."/>
        </authorList>
    </citation>
    <scope>NUCLEOTIDE SEQUENCE [LARGE SCALE GENOMIC DNA]</scope>
    <source>
        <strain>Tuebingen</strain>
    </source>
</reference>
<reference key="2">
    <citation type="submission" date="2006-04" db="EMBL/GenBank/DDBJ databases">
        <authorList>
            <consortium name="NIH - Zebrafish Gene Collection (ZGC) project"/>
        </authorList>
    </citation>
    <scope>NUCLEOTIDE SEQUENCE [LARGE SCALE MRNA]</scope>
    <source>
        <tissue>Olfactory epithelium</tissue>
    </source>
</reference>
<proteinExistence type="evidence at transcript level"/>